<gene>
    <name evidence="8" type="primary">FAM21</name>
    <name evidence="8" type="ORF">CG16742</name>
</gene>
<accession>A1ZBW7</accession>
<accession>Q1EC81</accession>
<accession>Q960K6</accession>
<organism>
    <name type="scientific">Drosophila melanogaster</name>
    <name type="common">Fruit fly</name>
    <dbReference type="NCBI Taxonomy" id="7227"/>
    <lineage>
        <taxon>Eukaryota</taxon>
        <taxon>Metazoa</taxon>
        <taxon>Ecdysozoa</taxon>
        <taxon>Arthropoda</taxon>
        <taxon>Hexapoda</taxon>
        <taxon>Insecta</taxon>
        <taxon>Pterygota</taxon>
        <taxon>Neoptera</taxon>
        <taxon>Endopterygota</taxon>
        <taxon>Diptera</taxon>
        <taxon>Brachycera</taxon>
        <taxon>Muscomorpha</taxon>
        <taxon>Ephydroidea</taxon>
        <taxon>Drosophilidae</taxon>
        <taxon>Drosophila</taxon>
        <taxon>Sophophora</taxon>
    </lineage>
</organism>
<reference key="1">
    <citation type="journal article" date="2000" name="Science">
        <title>The genome sequence of Drosophila melanogaster.</title>
        <authorList>
            <person name="Adams M.D."/>
            <person name="Celniker S.E."/>
            <person name="Holt R.A."/>
            <person name="Evans C.A."/>
            <person name="Gocayne J.D."/>
            <person name="Amanatides P.G."/>
            <person name="Scherer S.E."/>
            <person name="Li P.W."/>
            <person name="Hoskins R.A."/>
            <person name="Galle R.F."/>
            <person name="George R.A."/>
            <person name="Lewis S.E."/>
            <person name="Richards S."/>
            <person name="Ashburner M."/>
            <person name="Henderson S.N."/>
            <person name="Sutton G.G."/>
            <person name="Wortman J.R."/>
            <person name="Yandell M.D."/>
            <person name="Zhang Q."/>
            <person name="Chen L.X."/>
            <person name="Brandon R.C."/>
            <person name="Rogers Y.-H.C."/>
            <person name="Blazej R.G."/>
            <person name="Champe M."/>
            <person name="Pfeiffer B.D."/>
            <person name="Wan K.H."/>
            <person name="Doyle C."/>
            <person name="Baxter E.G."/>
            <person name="Helt G."/>
            <person name="Nelson C.R."/>
            <person name="Miklos G.L.G."/>
            <person name="Abril J.F."/>
            <person name="Agbayani A."/>
            <person name="An H.-J."/>
            <person name="Andrews-Pfannkoch C."/>
            <person name="Baldwin D."/>
            <person name="Ballew R.M."/>
            <person name="Basu A."/>
            <person name="Baxendale J."/>
            <person name="Bayraktaroglu L."/>
            <person name="Beasley E.M."/>
            <person name="Beeson K.Y."/>
            <person name="Benos P.V."/>
            <person name="Berman B.P."/>
            <person name="Bhandari D."/>
            <person name="Bolshakov S."/>
            <person name="Borkova D."/>
            <person name="Botchan M.R."/>
            <person name="Bouck J."/>
            <person name="Brokstein P."/>
            <person name="Brottier P."/>
            <person name="Burtis K.C."/>
            <person name="Busam D.A."/>
            <person name="Butler H."/>
            <person name="Cadieu E."/>
            <person name="Center A."/>
            <person name="Chandra I."/>
            <person name="Cherry J.M."/>
            <person name="Cawley S."/>
            <person name="Dahlke C."/>
            <person name="Davenport L.B."/>
            <person name="Davies P."/>
            <person name="de Pablos B."/>
            <person name="Delcher A."/>
            <person name="Deng Z."/>
            <person name="Mays A.D."/>
            <person name="Dew I."/>
            <person name="Dietz S.M."/>
            <person name="Dodson K."/>
            <person name="Doup L.E."/>
            <person name="Downes M."/>
            <person name="Dugan-Rocha S."/>
            <person name="Dunkov B.C."/>
            <person name="Dunn P."/>
            <person name="Durbin K.J."/>
            <person name="Evangelista C.C."/>
            <person name="Ferraz C."/>
            <person name="Ferriera S."/>
            <person name="Fleischmann W."/>
            <person name="Fosler C."/>
            <person name="Gabrielian A.E."/>
            <person name="Garg N.S."/>
            <person name="Gelbart W.M."/>
            <person name="Glasser K."/>
            <person name="Glodek A."/>
            <person name="Gong F."/>
            <person name="Gorrell J.H."/>
            <person name="Gu Z."/>
            <person name="Guan P."/>
            <person name="Harris M."/>
            <person name="Harris N.L."/>
            <person name="Harvey D.A."/>
            <person name="Heiman T.J."/>
            <person name="Hernandez J.R."/>
            <person name="Houck J."/>
            <person name="Hostin D."/>
            <person name="Houston K.A."/>
            <person name="Howland T.J."/>
            <person name="Wei M.-H."/>
            <person name="Ibegwam C."/>
            <person name="Jalali M."/>
            <person name="Kalush F."/>
            <person name="Karpen G.H."/>
            <person name="Ke Z."/>
            <person name="Kennison J.A."/>
            <person name="Ketchum K.A."/>
            <person name="Kimmel B.E."/>
            <person name="Kodira C.D."/>
            <person name="Kraft C.L."/>
            <person name="Kravitz S."/>
            <person name="Kulp D."/>
            <person name="Lai Z."/>
            <person name="Lasko P."/>
            <person name="Lei Y."/>
            <person name="Levitsky A.A."/>
            <person name="Li J.H."/>
            <person name="Li Z."/>
            <person name="Liang Y."/>
            <person name="Lin X."/>
            <person name="Liu X."/>
            <person name="Mattei B."/>
            <person name="McIntosh T.C."/>
            <person name="McLeod M.P."/>
            <person name="McPherson D."/>
            <person name="Merkulov G."/>
            <person name="Milshina N.V."/>
            <person name="Mobarry C."/>
            <person name="Morris J."/>
            <person name="Moshrefi A."/>
            <person name="Mount S.M."/>
            <person name="Moy M."/>
            <person name="Murphy B."/>
            <person name="Murphy L."/>
            <person name="Muzny D.M."/>
            <person name="Nelson D.L."/>
            <person name="Nelson D.R."/>
            <person name="Nelson K.A."/>
            <person name="Nixon K."/>
            <person name="Nusskern D.R."/>
            <person name="Pacleb J.M."/>
            <person name="Palazzolo M."/>
            <person name="Pittman G.S."/>
            <person name="Pan S."/>
            <person name="Pollard J."/>
            <person name="Puri V."/>
            <person name="Reese M.G."/>
            <person name="Reinert K."/>
            <person name="Remington K."/>
            <person name="Saunders R.D.C."/>
            <person name="Scheeler F."/>
            <person name="Shen H."/>
            <person name="Shue B.C."/>
            <person name="Siden-Kiamos I."/>
            <person name="Simpson M."/>
            <person name="Skupski M.P."/>
            <person name="Smith T.J."/>
            <person name="Spier E."/>
            <person name="Spradling A.C."/>
            <person name="Stapleton M."/>
            <person name="Strong R."/>
            <person name="Sun E."/>
            <person name="Svirskas R."/>
            <person name="Tector C."/>
            <person name="Turner R."/>
            <person name="Venter E."/>
            <person name="Wang A.H."/>
            <person name="Wang X."/>
            <person name="Wang Z.-Y."/>
            <person name="Wassarman D.A."/>
            <person name="Weinstock G.M."/>
            <person name="Weissenbach J."/>
            <person name="Williams S.M."/>
            <person name="Woodage T."/>
            <person name="Worley K.C."/>
            <person name="Wu D."/>
            <person name="Yang S."/>
            <person name="Yao Q.A."/>
            <person name="Ye J."/>
            <person name="Yeh R.-F."/>
            <person name="Zaveri J.S."/>
            <person name="Zhan M."/>
            <person name="Zhang G."/>
            <person name="Zhao Q."/>
            <person name="Zheng L."/>
            <person name="Zheng X.H."/>
            <person name="Zhong F.N."/>
            <person name="Zhong W."/>
            <person name="Zhou X."/>
            <person name="Zhu S.C."/>
            <person name="Zhu X."/>
            <person name="Smith H.O."/>
            <person name="Gibbs R.A."/>
            <person name="Myers E.W."/>
            <person name="Rubin G.M."/>
            <person name="Venter J.C."/>
        </authorList>
    </citation>
    <scope>NUCLEOTIDE SEQUENCE [LARGE SCALE GENOMIC DNA]</scope>
    <source>
        <strain>Berkeley</strain>
    </source>
</reference>
<reference key="2">
    <citation type="journal article" date="2002" name="Genome Biol.">
        <title>Annotation of the Drosophila melanogaster euchromatic genome: a systematic review.</title>
        <authorList>
            <person name="Misra S."/>
            <person name="Crosby M.A."/>
            <person name="Mungall C.J."/>
            <person name="Matthews B.B."/>
            <person name="Campbell K.S."/>
            <person name="Hradecky P."/>
            <person name="Huang Y."/>
            <person name="Kaminker J.S."/>
            <person name="Millburn G.H."/>
            <person name="Prochnik S.E."/>
            <person name="Smith C.D."/>
            <person name="Tupy J.L."/>
            <person name="Whitfield E.J."/>
            <person name="Bayraktaroglu L."/>
            <person name="Berman B.P."/>
            <person name="Bettencourt B.R."/>
            <person name="Celniker S.E."/>
            <person name="de Grey A.D.N.J."/>
            <person name="Drysdale R.A."/>
            <person name="Harris N.L."/>
            <person name="Richter J."/>
            <person name="Russo S."/>
            <person name="Schroeder A.J."/>
            <person name="Shu S.Q."/>
            <person name="Stapleton M."/>
            <person name="Yamada C."/>
            <person name="Ashburner M."/>
            <person name="Gelbart W.M."/>
            <person name="Rubin G.M."/>
            <person name="Lewis S.E."/>
        </authorList>
    </citation>
    <scope>GENOME REANNOTATION</scope>
    <source>
        <strain>Berkeley</strain>
    </source>
</reference>
<reference key="3">
    <citation type="submission" date="2006-06" db="EMBL/GenBank/DDBJ databases">
        <authorList>
            <person name="Stapleton M."/>
            <person name="Carlson J.W."/>
            <person name="Chavez C."/>
            <person name="Frise E."/>
            <person name="George R.A."/>
            <person name="Pacleb J.M."/>
            <person name="Park S."/>
            <person name="Wan K.H."/>
            <person name="Yu C."/>
            <person name="Celniker S.E."/>
        </authorList>
    </citation>
    <scope>NUCLEOTIDE SEQUENCE [LARGE SCALE MRNA]</scope>
    <source>
        <strain>Berkeley</strain>
    </source>
</reference>
<reference key="4">
    <citation type="journal article" date="2002" name="Genome Biol.">
        <title>A Drosophila full-length cDNA resource.</title>
        <authorList>
            <person name="Stapleton M."/>
            <person name="Carlson J.W."/>
            <person name="Brokstein P."/>
            <person name="Yu C."/>
            <person name="Champe M."/>
            <person name="George R.A."/>
            <person name="Guarin H."/>
            <person name="Kronmiller B."/>
            <person name="Pacleb J.M."/>
            <person name="Park S."/>
            <person name="Wan K.H."/>
            <person name="Rubin G.M."/>
            <person name="Celniker S.E."/>
        </authorList>
    </citation>
    <scope>NUCLEOTIDE SEQUENCE [LARGE SCALE MRNA] OF 982-1469</scope>
    <source>
        <strain>Berkeley</strain>
        <tissue>Embryo</tissue>
    </source>
</reference>
<reference key="5">
    <citation type="journal article" date="2008" name="J. Proteome Res.">
        <title>Phosphoproteome analysis of Drosophila melanogaster embryos.</title>
        <authorList>
            <person name="Zhai B."/>
            <person name="Villen J."/>
            <person name="Beausoleil S.A."/>
            <person name="Mintseris J."/>
            <person name="Gygi S.P."/>
        </authorList>
    </citation>
    <scope>PHOSPHORYLATION [LARGE SCALE ANALYSIS] AT SER-136; SER-227; SER-422; SER-426; SER-580; THR-587; THR-693; SER-1241; SER-1245; SER-1254; SER-1380; SER-1381 AND SER-1408</scope>
    <scope>IDENTIFICATION BY MASS SPECTROMETRY</scope>
    <source>
        <tissue>Embryo</tissue>
    </source>
</reference>
<reference key="6">
    <citation type="journal article" date="2007" name="Mol. Biosyst.">
        <title>An integrated chemical, mass spectrometric and computational strategy for (quantitative) phosphoproteomics: application to Drosophila melanogaster Kc167 cells.</title>
        <authorList>
            <person name="Bodenmiller B."/>
            <person name="Mueller L.N."/>
            <person name="Pedrioli P.G.A."/>
            <person name="Pflieger D."/>
            <person name="Juenger M.A."/>
            <person name="Eng J.K."/>
            <person name="Aebersold R."/>
            <person name="Tao W.A."/>
        </authorList>
    </citation>
    <scope>PHOSPHORYLATION [LARGE SCALE ANALYSIS] AT SER-1344</scope>
    <scope>IDENTIFICATION BY MASS SPECTROMETRY</scope>
</reference>
<reference key="7">
    <citation type="journal article" date="2010" name="Proc. Natl. Acad. Sci. U.S.A.">
        <title>WASH and WAVE actin regulators of the Wiskott-Aldrich syndrome protein (WASP) family are controlled by analogous structurally related complexes.</title>
        <authorList>
            <person name="Jia D."/>
            <person name="Gomez T.S."/>
            <person name="Metlagel Z."/>
            <person name="Umetani J."/>
            <person name="Otwinowski Z."/>
            <person name="Rosen M.K."/>
            <person name="Billadeau D.D."/>
        </authorList>
    </citation>
    <scope>SUBUNIT</scope>
</reference>
<feature type="chain" id="PRO_0000372653" description="WASH complex subunit 2">
    <location>
        <begin position="1"/>
        <end position="1469"/>
    </location>
</feature>
<feature type="region of interest" description="Disordered" evidence="3">
    <location>
        <begin position="178"/>
        <end position="349"/>
    </location>
</feature>
<feature type="region of interest" description="Disordered" evidence="3">
    <location>
        <begin position="367"/>
        <end position="546"/>
    </location>
</feature>
<feature type="region of interest" description="Disordered" evidence="3">
    <location>
        <begin position="571"/>
        <end position="591"/>
    </location>
</feature>
<feature type="region of interest" description="Disordered" evidence="3">
    <location>
        <begin position="607"/>
        <end position="760"/>
    </location>
</feature>
<feature type="region of interest" description="Disordered" evidence="3">
    <location>
        <begin position="933"/>
        <end position="1254"/>
    </location>
</feature>
<feature type="region of interest" description="Disordered" evidence="3">
    <location>
        <begin position="1316"/>
        <end position="1469"/>
    </location>
</feature>
<feature type="short sequence motif" description="LFa 1" evidence="2">
    <location>
        <begin position="351"/>
        <end position="372"/>
    </location>
</feature>
<feature type="short sequence motif" description="LFa 5" evidence="2">
    <location>
        <begin position="550"/>
        <end position="563"/>
    </location>
</feature>
<feature type="short sequence motif" description="LFa 6" evidence="2">
    <location>
        <begin position="595"/>
        <end position="605"/>
    </location>
</feature>
<feature type="short sequence motif" description="LFa 8" evidence="2">
    <location>
        <begin position="698"/>
        <end position="709"/>
    </location>
</feature>
<feature type="compositionally biased region" description="Basic and acidic residues" evidence="3">
    <location>
        <begin position="197"/>
        <end position="206"/>
    </location>
</feature>
<feature type="compositionally biased region" description="Low complexity" evidence="3">
    <location>
        <begin position="276"/>
        <end position="293"/>
    </location>
</feature>
<feature type="compositionally biased region" description="Low complexity" evidence="3">
    <location>
        <begin position="306"/>
        <end position="316"/>
    </location>
</feature>
<feature type="compositionally biased region" description="Polar residues" evidence="3">
    <location>
        <begin position="370"/>
        <end position="385"/>
    </location>
</feature>
<feature type="compositionally biased region" description="Basic and acidic residues" evidence="3">
    <location>
        <begin position="387"/>
        <end position="399"/>
    </location>
</feature>
<feature type="compositionally biased region" description="Acidic residues" evidence="3">
    <location>
        <begin position="519"/>
        <end position="528"/>
    </location>
</feature>
<feature type="compositionally biased region" description="Polar residues" evidence="3">
    <location>
        <begin position="574"/>
        <end position="585"/>
    </location>
</feature>
<feature type="compositionally biased region" description="Basic and acidic residues" evidence="3">
    <location>
        <begin position="626"/>
        <end position="649"/>
    </location>
</feature>
<feature type="compositionally biased region" description="Basic and acidic residues" evidence="3">
    <location>
        <begin position="671"/>
        <end position="687"/>
    </location>
</feature>
<feature type="compositionally biased region" description="Polar residues" evidence="3">
    <location>
        <begin position="709"/>
        <end position="728"/>
    </location>
</feature>
<feature type="compositionally biased region" description="Polar residues" evidence="3">
    <location>
        <begin position="735"/>
        <end position="745"/>
    </location>
</feature>
<feature type="compositionally biased region" description="Polar residues" evidence="3">
    <location>
        <begin position="938"/>
        <end position="956"/>
    </location>
</feature>
<feature type="compositionally biased region" description="Basic and acidic residues" evidence="3">
    <location>
        <begin position="971"/>
        <end position="990"/>
    </location>
</feature>
<feature type="compositionally biased region" description="Basic and acidic residues" evidence="3">
    <location>
        <begin position="1031"/>
        <end position="1042"/>
    </location>
</feature>
<feature type="compositionally biased region" description="Basic and acidic residues" evidence="3">
    <location>
        <begin position="1077"/>
        <end position="1089"/>
    </location>
</feature>
<feature type="compositionally biased region" description="Polar residues" evidence="3">
    <location>
        <begin position="1091"/>
        <end position="1109"/>
    </location>
</feature>
<feature type="compositionally biased region" description="Basic residues" evidence="3">
    <location>
        <begin position="1118"/>
        <end position="1136"/>
    </location>
</feature>
<feature type="compositionally biased region" description="Basic and acidic residues" evidence="3">
    <location>
        <begin position="1159"/>
        <end position="1170"/>
    </location>
</feature>
<feature type="compositionally biased region" description="Low complexity" evidence="3">
    <location>
        <begin position="1417"/>
        <end position="1426"/>
    </location>
</feature>
<feature type="compositionally biased region" description="Low complexity" evidence="3">
    <location>
        <begin position="1434"/>
        <end position="1452"/>
    </location>
</feature>
<feature type="modified residue" description="Phosphoserine" evidence="5">
    <location>
        <position position="136"/>
    </location>
</feature>
<feature type="modified residue" description="Phosphoserine" evidence="5">
    <location>
        <position position="227"/>
    </location>
</feature>
<feature type="modified residue" description="Phosphoserine" evidence="5">
    <location>
        <position position="422"/>
    </location>
</feature>
<feature type="modified residue" description="Phosphoserine" evidence="5">
    <location>
        <position position="426"/>
    </location>
</feature>
<feature type="modified residue" description="Phosphoserine" evidence="5">
    <location>
        <position position="580"/>
    </location>
</feature>
<feature type="modified residue" description="Phosphothreonine" evidence="5">
    <location>
        <position position="587"/>
    </location>
</feature>
<feature type="modified residue" description="Phosphothreonine" evidence="5">
    <location>
        <position position="693"/>
    </location>
</feature>
<feature type="modified residue" description="Phosphoserine" evidence="5">
    <location>
        <position position="1241"/>
    </location>
</feature>
<feature type="modified residue" description="Phosphoserine" evidence="5">
    <location>
        <position position="1245"/>
    </location>
</feature>
<feature type="modified residue" description="Phosphoserine" evidence="5">
    <location>
        <position position="1254"/>
    </location>
</feature>
<feature type="modified residue" description="Phosphoserine" evidence="4">
    <location>
        <position position="1344"/>
    </location>
</feature>
<feature type="modified residue" description="Phosphoserine" evidence="5">
    <location>
        <position position="1380"/>
    </location>
</feature>
<feature type="modified residue" description="Phosphoserine" evidence="5">
    <location>
        <position position="1381"/>
    </location>
</feature>
<feature type="modified residue" description="Phosphoserine" evidence="5">
    <location>
        <position position="1408"/>
    </location>
</feature>
<feature type="sequence conflict" description="In Ref. 3; ABF85753." evidence="7" ref="3">
    <original>T</original>
    <variation>N</variation>
    <location>
        <position position="66"/>
    </location>
</feature>
<feature type="sequence conflict" description="In Ref. 3; ABF85753." evidence="7" ref="3">
    <original>N</original>
    <variation>K</variation>
    <location>
        <position position="240"/>
    </location>
</feature>
<feature type="sequence conflict" description="In Ref. 3; ABF85753." evidence="7" ref="3">
    <original>V</original>
    <variation>A</variation>
    <location>
        <position position="249"/>
    </location>
</feature>
<feature type="sequence conflict" description="In Ref. 3; ABF85753." evidence="7" ref="3">
    <original>N</original>
    <variation>S</variation>
    <location>
        <position position="259"/>
    </location>
</feature>
<feature type="sequence conflict" description="In Ref. 3; ABF85753." evidence="7" ref="3">
    <original>EYP</original>
    <variation>PYS</variation>
    <location>
        <begin position="397"/>
        <end position="399"/>
    </location>
</feature>
<feature type="sequence conflict" description="In Ref. 3; ABF85753." evidence="7" ref="3">
    <original>K</original>
    <variation>T</variation>
    <location>
        <position position="405"/>
    </location>
</feature>
<feature type="sequence conflict" description="In Ref. 3; ABF85753." evidence="7" ref="3">
    <original>T</original>
    <variation>I</variation>
    <location>
        <position position="411"/>
    </location>
</feature>
<feature type="sequence conflict" description="In Ref. 3; ABF85753." evidence="7" ref="3">
    <original>R</original>
    <variation>Q</variation>
    <location>
        <position position="447"/>
    </location>
</feature>
<feature type="sequence conflict" description="In Ref. 3; ABF85753." evidence="7" ref="3">
    <original>N</original>
    <variation>D</variation>
    <location>
        <position position="455"/>
    </location>
</feature>
<feature type="sequence conflict" description="In Ref. 3; ABF85753." evidence="7" ref="3">
    <original>K</original>
    <variation>R</variation>
    <location>
        <position position="502"/>
    </location>
</feature>
<feature type="sequence conflict" description="In Ref. 3; ABF85753." evidence="7" ref="3">
    <original>P</original>
    <variation>T</variation>
    <location>
        <position position="506"/>
    </location>
</feature>
<feature type="sequence conflict" description="In Ref. 3; ABF85753." evidence="7" ref="3">
    <original>D</original>
    <variation>Y</variation>
    <location>
        <position position="619"/>
    </location>
</feature>
<feature type="sequence conflict" description="In Ref. 3; ABF85753." evidence="7" ref="3">
    <original>EA</original>
    <variation>DT</variation>
    <location>
        <begin position="623"/>
        <end position="624"/>
    </location>
</feature>
<feature type="sequence conflict" description="In Ref. 3; ABF85753." evidence="7" ref="3">
    <original>N</original>
    <variation>S</variation>
    <location>
        <position position="925"/>
    </location>
</feature>
<feature type="sequence conflict" description="In Ref. 3; ABF85753." evidence="7" ref="3">
    <original>KE</original>
    <variation>NQ</variation>
    <location>
        <begin position="981"/>
        <end position="982"/>
    </location>
</feature>
<feature type="sequence conflict" description="In Ref. 3; ABF85753." evidence="7" ref="3">
    <original>P</original>
    <variation>T</variation>
    <location>
        <position position="1021"/>
    </location>
</feature>
<feature type="sequence conflict" description="In Ref. 3; ABF85753." evidence="7" ref="3">
    <original>S</original>
    <variation>N</variation>
    <location>
        <position position="1035"/>
    </location>
</feature>
<feature type="sequence conflict" description="In Ref. 3; ABF85753." evidence="7" ref="3">
    <original>L</original>
    <variation>H</variation>
    <location>
        <position position="1065"/>
    </location>
</feature>
<feature type="sequence conflict" description="In Ref. 3; ABF85753." evidence="7" ref="3">
    <original>S</original>
    <variation>G</variation>
    <location>
        <position position="1071"/>
    </location>
</feature>
<feature type="sequence conflict" description="In Ref. 3; ABF85753." evidence="7" ref="3">
    <original>R</original>
    <variation>K</variation>
    <location>
        <position position="1086"/>
    </location>
</feature>
<feature type="sequence conflict" description="In Ref. 3; ABF85753." evidence="7" ref="3">
    <original>T</original>
    <variation>P</variation>
    <location>
        <position position="1095"/>
    </location>
</feature>
<feature type="sequence conflict" description="In Ref. 3; ABF85753." evidence="7" ref="3">
    <original>N</original>
    <variation>D</variation>
    <location>
        <position position="1150"/>
    </location>
</feature>
<feature type="sequence conflict" description="In Ref. 3; ABF85753." evidence="7" ref="3">
    <original>A</original>
    <variation>S</variation>
    <location>
        <position position="1155"/>
    </location>
</feature>
<feature type="sequence conflict" description="In Ref. 3; ABF85753." evidence="7" ref="3">
    <original>F</original>
    <variation>L</variation>
    <location>
        <position position="1208"/>
    </location>
</feature>
<feature type="sequence conflict" description="In Ref. 3; ABF85753." evidence="7" ref="3">
    <original>VPT</original>
    <variation>IPK</variation>
    <location>
        <begin position="1222"/>
        <end position="1224"/>
    </location>
</feature>
<feature type="sequence conflict" description="In Ref. 3; ABF85753." evidence="7" ref="3">
    <original>T</original>
    <variation>S</variation>
    <location>
        <position position="1233"/>
    </location>
</feature>
<feature type="sequence conflict" description="In Ref. 3; ABF85753." evidence="7" ref="3">
    <original>N</original>
    <variation>S</variation>
    <location>
        <position position="1259"/>
    </location>
</feature>
<feature type="sequence conflict" description="In Ref. 3; ABF85753." evidence="7" ref="3">
    <original>GINVV</original>
    <variation>CFNEP</variation>
    <location>
        <begin position="1262"/>
        <end position="1266"/>
    </location>
</feature>
<feature type="sequence conflict" description="In Ref. 3; ABF85753." evidence="7" ref="3">
    <original>K</original>
    <variation>NLQ</variation>
    <location>
        <position position="1271"/>
    </location>
</feature>
<feature type="sequence conflict" description="In Ref. 3; ABF85753." evidence="7" ref="3">
    <original>A</original>
    <variation>D</variation>
    <location>
        <position position="1281"/>
    </location>
</feature>
<feature type="sequence conflict" description="In Ref. 3; ABF85753." evidence="7" ref="3">
    <original>N</original>
    <variation>K</variation>
    <location>
        <position position="1296"/>
    </location>
</feature>
<feature type="sequence conflict" description="In Ref. 3; ABF85753." evidence="7" ref="3">
    <original>M</original>
    <variation>V</variation>
    <location>
        <position position="1310"/>
    </location>
</feature>
<feature type="sequence conflict" description="In Ref. 3; ABF85753." evidence="7" ref="3">
    <original>A</original>
    <variation>S</variation>
    <location>
        <position position="1319"/>
    </location>
</feature>
<feature type="sequence conflict" description="In Ref. 3; ABF85753." evidence="7" ref="3">
    <original>S</original>
    <variation>T</variation>
    <location>
        <position position="1392"/>
    </location>
</feature>
<feature type="sequence conflict" description="In Ref. 3; ABF85753." evidence="7" ref="3">
    <original>P</original>
    <variation>T</variation>
    <location>
        <position position="1402"/>
    </location>
</feature>
<keyword id="KW-0597">Phosphoprotein</keyword>
<keyword id="KW-1185">Reference proteome</keyword>
<sequence length="1469" mass="160899">MDISADVDQIIAQAPDWTFAGDCALLALMKRISQNLEERGERTSRNLRDFETSVKQVDIALNNATTSLRSLQFGNQFVEYRVEEVDDADLAMPEEKKKKPELPLKSSEELAKEFLENNLRMFRKNYEPVTIEVPDSDDEDGPVHSTTVFRAKNPYDAIPLPYIIGTKEWQEHKYAGLYDSKENSEDDRSEEFSSSSSDEKEPETKKIATPANKLEEQHLSDSSSLASFAREPAIVSPVINPAVQVAEPVIRTQPRPIINSQRNPHERDMFAALRQSPPSDDPPSTSSSPTSSPAFRNPSSRLPIVSTASLSSSSSSPAQQPPRLFDEAVSTQTPKEAEIKPSQTKRMPVNLFNEDEFKSFMSEIVDKVQSKTPSSSVSPATTISTKEPPKTKKPVEEYPKPGPPKQIVEQTVPKRVNLFDDSPPLSPTPRSEPVFNNTKATGAIPKRSPVVVANNDEDNSLFGSSPAMPKENPSKKPPKPVTKSLFDDDLEDDDFLSSFTPKAKPPEQKLLSKPKPSLFDDDDLDIDDIFTKPSAQPKKLSERVAGKTSLFEDDDQDDVTDLFGSKKAKVIPKETSSGVSPNKNVETPVASKKSLFDDIEDEDLFGTPKAKNLIRSEPDNDPEAVGEDKKQSEIAEQKSKNIETGEKQHQVIAENASVPILRDSPPPMEVTEQKSDDKEWEAVKDDTSAANITKSKDLFSEDLTDDELFSSTSNNMAEPKSANETNEFNKPIEKYTSQTEENVSPVNPPTKLSIKPTDLFNEDFSDDDTFLSASMSKNEPLVGTENEDIKKPSEVQLVKEIKAEELPQQLPENKIYEITAVVEKDELVPEMLSKPQIDEPVSETPPPDDYQSNVDPIISMVADVTNKTSVDTLTPRKPADLAAAQQIMQNYSNLFSDEPPDDSEFFQTLGSSGLSSLSASKIFDNEHDFFEPALPNIPSATKPSPVTPGDQPSVSSDYGAMCLFSDVPPEDNDHAGEEVQKEAEPQKDELASTTRIHTIFYDDFSETARAGAVQPAPKRFPFDDEPPPADETDRSEVKETPELQKPTSPVKKLKMPNININVHALLPGSGSVPKLIRKQESSSSERDEPQATVQTEAEAPSSGQNTVSSADGVLQHVNKSRARGPAKRRPSTRRGRKENYAKSLLDAGQNEGPTASTRDSPEVEHSERSSIKAPSPQYVKPEKLFSTPAQQIQPQLQRPPPSNTGGSFLDSPDEDDSFFNSVPTKTVEGKQGTDPPKSYRSFLDSPDADDKLFSDLENNKAGINVVPVEKKPPKMANSFLASPDEDDFLFDSVKTNATTTAQKAFAAEIMNAFQKVTTAPPKPSNAKEAAKPKSQAAPKLFDDSDDDDDDLFARAPSIQTASKPVQAKQPPKPAATSLFSSDDEEAEVPVKSAPAKKLPVKPSKSLFSDDDDDDDLFGGSSTSKAAAAKKTKPAARTASKPPASKTTTPTATIPSNSGDNPLADLLDFK</sequence>
<protein>
    <recommendedName>
        <fullName evidence="1">WASH complex subunit 2</fullName>
    </recommendedName>
    <alternativeName>
        <fullName evidence="8">Family with sequence similarity 21</fullName>
    </alternativeName>
</protein>
<evidence type="ECO:0000250" key="1">
    <source>
        <dbReference type="UniProtKB" id="Q6PGL7"/>
    </source>
</evidence>
<evidence type="ECO:0000250" key="2">
    <source>
        <dbReference type="UniProtKB" id="Q9Y4E1"/>
    </source>
</evidence>
<evidence type="ECO:0000256" key="3">
    <source>
        <dbReference type="SAM" id="MobiDB-lite"/>
    </source>
</evidence>
<evidence type="ECO:0000269" key="4">
    <source>
    </source>
</evidence>
<evidence type="ECO:0000269" key="5">
    <source>
    </source>
</evidence>
<evidence type="ECO:0000269" key="6">
    <source>
    </source>
</evidence>
<evidence type="ECO:0000305" key="7"/>
<evidence type="ECO:0000312" key="8">
    <source>
        <dbReference type="FlyBase" id="FBgn0034529"/>
    </source>
</evidence>
<proteinExistence type="evidence at protein level"/>
<name>WASC2_DROME</name>
<comment type="function">
    <text evidence="2">Acts at least in part as component of the WASH complex which may regulate wash nucleation-promoting factor (NPF) activity and is required for its membrane targeting during endosomal sorting.</text>
</comment>
<comment type="subunit">
    <text evidence="6">Component of the WASH complex.</text>
</comment>
<comment type="similarity">
    <text evidence="7">Belongs to the FAM21 family.</text>
</comment>
<comment type="sequence caution" evidence="7">
    <conflict type="erroneous initiation">
        <sequence resource="EMBL-CDS" id="AAK93436"/>
    </conflict>
    <text>Truncated N-terminus.</text>
</comment>
<dbReference type="EMBL" id="AE013599">
    <property type="protein sequence ID" value="AAF57444.1"/>
    <property type="molecule type" value="Genomic_DNA"/>
</dbReference>
<dbReference type="EMBL" id="BT025853">
    <property type="protein sequence ID" value="ABF85753.1"/>
    <property type="molecule type" value="mRNA"/>
</dbReference>
<dbReference type="EMBL" id="AY052012">
    <property type="protein sequence ID" value="AAK93436.1"/>
    <property type="status" value="ALT_INIT"/>
    <property type="molecule type" value="mRNA"/>
</dbReference>
<dbReference type="RefSeq" id="NP_611496.1">
    <property type="nucleotide sequence ID" value="NM_137652.4"/>
</dbReference>
<dbReference type="SMR" id="A1ZBW7"/>
<dbReference type="BioGRID" id="62981">
    <property type="interactions" value="4"/>
</dbReference>
<dbReference type="ComplexPortal" id="CPX-2562">
    <property type="entry name" value="WASH complex"/>
</dbReference>
<dbReference type="FunCoup" id="A1ZBW7">
    <property type="interactions" value="990"/>
</dbReference>
<dbReference type="IntAct" id="A1ZBW7">
    <property type="interactions" value="3"/>
</dbReference>
<dbReference type="STRING" id="7227.FBpp0085541"/>
<dbReference type="GlyGen" id="A1ZBW7">
    <property type="glycosylation" value="2 sites"/>
</dbReference>
<dbReference type="iPTMnet" id="A1ZBW7"/>
<dbReference type="PaxDb" id="7227-FBpp0085541"/>
<dbReference type="EnsemblMetazoa" id="FBtr0086227">
    <property type="protein sequence ID" value="FBpp0085541"/>
    <property type="gene ID" value="FBgn0034529"/>
</dbReference>
<dbReference type="GeneID" id="37331"/>
<dbReference type="KEGG" id="dme:Dmel_CG16742"/>
<dbReference type="UCSC" id="CG16742-RA">
    <property type="organism name" value="d. melanogaster"/>
</dbReference>
<dbReference type="UCSC" id="CG16742-RB">
    <property type="organism name" value="d. melanogaster"/>
</dbReference>
<dbReference type="AGR" id="FB:FBgn0034529"/>
<dbReference type="CTD" id="37331"/>
<dbReference type="FlyBase" id="FBgn0034529">
    <property type="gene designation" value="FAM21"/>
</dbReference>
<dbReference type="VEuPathDB" id="VectorBase:FBgn0034529"/>
<dbReference type="eggNOG" id="ENOG502QTIY">
    <property type="taxonomic scope" value="Eukaryota"/>
</dbReference>
<dbReference type="GeneTree" id="ENSGT00940000153997"/>
<dbReference type="HOGENOM" id="CLU_259063_0_0_1"/>
<dbReference type="InParanoid" id="A1ZBW7"/>
<dbReference type="OMA" id="IHTIFYD"/>
<dbReference type="OrthoDB" id="751084at2759"/>
<dbReference type="PhylomeDB" id="A1ZBW7"/>
<dbReference type="BioGRID-ORCS" id="37331">
    <property type="hits" value="0 hits in 3 CRISPR screens"/>
</dbReference>
<dbReference type="GenomeRNAi" id="37331"/>
<dbReference type="PRO" id="PR:A1ZBW7"/>
<dbReference type="Proteomes" id="UP000000803">
    <property type="component" value="Chromosome 2R"/>
</dbReference>
<dbReference type="Bgee" id="FBgn0034529">
    <property type="expression patterns" value="Expressed in dorsal appendage forming follicle cell in ovary and 120 other cell types or tissues"/>
</dbReference>
<dbReference type="GO" id="GO:0005829">
    <property type="term" value="C:cytosol"/>
    <property type="evidence" value="ECO:0007669"/>
    <property type="project" value="GOC"/>
</dbReference>
<dbReference type="GO" id="GO:0005769">
    <property type="term" value="C:early endosome"/>
    <property type="evidence" value="ECO:0000318"/>
    <property type="project" value="GO_Central"/>
</dbReference>
<dbReference type="GO" id="GO:0005654">
    <property type="term" value="C:nucleoplasm"/>
    <property type="evidence" value="ECO:0000314"/>
    <property type="project" value="FlyBase"/>
</dbReference>
<dbReference type="GO" id="GO:0071203">
    <property type="term" value="C:WASH complex"/>
    <property type="evidence" value="ECO:0000314"/>
    <property type="project" value="UniProtKB"/>
</dbReference>
<dbReference type="GO" id="GO:1901981">
    <property type="term" value="F:phosphatidylinositol phosphate binding"/>
    <property type="evidence" value="ECO:0000318"/>
    <property type="project" value="GO_Central"/>
</dbReference>
<dbReference type="GO" id="GO:1905394">
    <property type="term" value="F:retromer complex binding"/>
    <property type="evidence" value="ECO:0000318"/>
    <property type="project" value="GO_Central"/>
</dbReference>
<dbReference type="GO" id="GO:0140591">
    <property type="term" value="P:nuclear envelope budding"/>
    <property type="evidence" value="ECO:0000315"/>
    <property type="project" value="FlyBase"/>
</dbReference>
<dbReference type="GO" id="GO:0045785">
    <property type="term" value="P:positive regulation of cell adhesion"/>
    <property type="evidence" value="ECO:0000315"/>
    <property type="project" value="FlyBase"/>
</dbReference>
<dbReference type="GO" id="GO:0036010">
    <property type="term" value="P:protein localization to endosome"/>
    <property type="evidence" value="ECO:0000318"/>
    <property type="project" value="GO_Central"/>
</dbReference>
<dbReference type="GO" id="GO:0042147">
    <property type="term" value="P:retrograde transport, endosome to Golgi"/>
    <property type="evidence" value="ECO:0000318"/>
    <property type="project" value="GO_Central"/>
</dbReference>